<proteinExistence type="inferred from homology"/>
<sequence length="690" mass="80332">MAKKKSEEHSGADANDSDYQEEPNFEDPPGFVDNISDEDLLGDMLAQRPSEADGVESVVVVDNIPKVEPVRLEKLKSVINKLFSNYGDIVNVVYPVDEEGKTKGYAFMEYKQASQAEEAVKKLNNHRLDKNHTFAVNLFTDFQKYENIPEKWEPPTVQTFKVQSDLYNFINDPDTYDQYCVAAETAPNCVQVGFWQNVLPEPFELETRERFTDTFVKWSPLGTYVVTFHKPGVAIWGGSSFQKIQKFPHPGTQFVEFSPCENYLVTYGPTPTGQKIIIWDIRTGAEKRSFVADGMSVLSMFRWSHDDKFVARMGENSIHIYETPSFYLLDLKSIKIPGIRGFSWSPTDNVIAYWVEEQNQIPARVTLMEIPKKREIRNKNLFHVADCKLHWQKSGDYLCVKVDRYSKLKKDKKDLDVKFLGMFYNFEIFHMREKEIPVDSVEIRELILAFAWEPIGNKFSIIHGETNSSNVSFYEVNKGVKPSLVKRLEKKSCTHLFWSPRGQFIVMANLTMGTFEFVDSTNDYIITSSPDHFRASEVEWDPTGRYVVTGVSSWKVKEDTGFNMYTFQGRIIKRTILKNFVQFLWRPRPPTLLSEEKQKEIKKNLKKYYAAFEQKDRLRLTRASKELLEKRSQLRETFMEYRNKRIAEWADQKSRRIMLRGHVDTDNLETDEVDEEIVEFLVKEEVTLLE</sequence>
<keyword id="KW-0175">Coiled coil</keyword>
<keyword id="KW-0963">Cytoplasm</keyword>
<keyword id="KW-0396">Initiation factor</keyword>
<keyword id="KW-0648">Protein biosynthesis</keyword>
<keyword id="KW-1185">Reference proteome</keyword>
<keyword id="KW-0677">Repeat</keyword>
<keyword id="KW-0694">RNA-binding</keyword>
<keyword id="KW-0853">WD repeat</keyword>
<comment type="function">
    <text evidence="2">RNA-binding component of the eukaryotic translation initiation factor 3 (eIF-3) complex, which is involved in protein synthesis of a specialized repertoire of mRNAs and, together with other initiation factors, stimulates binding of mRNA and methionyl-tRNAi to the 40S ribosome. The eIF-3 complex specifically targets and initiates translation of a subset of mRNAs involved in cell proliferation.</text>
</comment>
<comment type="subunit">
    <text evidence="1 2">Component of the eukaryotic translation initiation factor 3 (eIF-3) complex. The eIF-3 complex interacts with pix. Interacts with mxt (By similarity).</text>
</comment>
<comment type="subcellular location">
    <subcellularLocation>
        <location evidence="2">Cytoplasm</location>
    </subcellularLocation>
</comment>
<comment type="similarity">
    <text evidence="2">Belongs to the eIF-3 subunit B family.</text>
</comment>
<protein>
    <recommendedName>
        <fullName evidence="2">Eukaryotic translation initiation factor 3 subunit B</fullName>
        <shortName evidence="2">eIF3b</shortName>
    </recommendedName>
    <alternativeName>
        <fullName evidence="2">Eukaryotic translation initiation factor 3 subunit 9</fullName>
    </alternativeName>
</protein>
<organism>
    <name type="scientific">Drosophila simulans</name>
    <name type="common">Fruit fly</name>
    <dbReference type="NCBI Taxonomy" id="7240"/>
    <lineage>
        <taxon>Eukaryota</taxon>
        <taxon>Metazoa</taxon>
        <taxon>Ecdysozoa</taxon>
        <taxon>Arthropoda</taxon>
        <taxon>Hexapoda</taxon>
        <taxon>Insecta</taxon>
        <taxon>Pterygota</taxon>
        <taxon>Neoptera</taxon>
        <taxon>Endopterygota</taxon>
        <taxon>Diptera</taxon>
        <taxon>Brachycera</taxon>
        <taxon>Muscomorpha</taxon>
        <taxon>Ephydroidea</taxon>
        <taxon>Drosophilidae</taxon>
        <taxon>Drosophila</taxon>
        <taxon>Sophophora</taxon>
    </lineage>
</organism>
<dbReference type="EMBL" id="CM000362">
    <property type="protein sequence ID" value="EDX07512.1"/>
    <property type="molecule type" value="Genomic_DNA"/>
</dbReference>
<dbReference type="SMR" id="B4QB88"/>
<dbReference type="STRING" id="7240.B4QB88"/>
<dbReference type="EnsemblMetazoa" id="FBtr0211194">
    <property type="protein sequence ID" value="FBpp0209686"/>
    <property type="gene ID" value="FBgn0183033"/>
</dbReference>
<dbReference type="EnsemblMetazoa" id="XM_002081891.4">
    <property type="protein sequence ID" value="XP_002081927.1"/>
    <property type="gene ID" value="LOC6734930"/>
</dbReference>
<dbReference type="GeneID" id="6734930"/>
<dbReference type="CTD" id="8662"/>
<dbReference type="HOGENOM" id="CLU_011152_1_0_1"/>
<dbReference type="OMA" id="LWGGPQF"/>
<dbReference type="OrthoDB" id="10250414at2759"/>
<dbReference type="PhylomeDB" id="B4QB88"/>
<dbReference type="Proteomes" id="UP000000304">
    <property type="component" value="Chromosome 2R"/>
</dbReference>
<dbReference type="Bgee" id="FBgn0183033">
    <property type="expression patterns" value="Expressed in embryo and 3 other cell types or tissues"/>
</dbReference>
<dbReference type="GO" id="GO:0016282">
    <property type="term" value="C:eukaryotic 43S preinitiation complex"/>
    <property type="evidence" value="ECO:0007669"/>
    <property type="project" value="UniProtKB-UniRule"/>
</dbReference>
<dbReference type="GO" id="GO:0033290">
    <property type="term" value="C:eukaryotic 48S preinitiation complex"/>
    <property type="evidence" value="ECO:0007669"/>
    <property type="project" value="UniProtKB-UniRule"/>
</dbReference>
<dbReference type="GO" id="GO:0005852">
    <property type="term" value="C:eukaryotic translation initiation factor 3 complex"/>
    <property type="evidence" value="ECO:0000250"/>
    <property type="project" value="UniProtKB"/>
</dbReference>
<dbReference type="GO" id="GO:0003723">
    <property type="term" value="F:RNA binding"/>
    <property type="evidence" value="ECO:0007669"/>
    <property type="project" value="UniProtKB-UniRule"/>
</dbReference>
<dbReference type="GO" id="GO:0003743">
    <property type="term" value="F:translation initiation factor activity"/>
    <property type="evidence" value="ECO:0000250"/>
    <property type="project" value="UniProtKB"/>
</dbReference>
<dbReference type="GO" id="GO:0031369">
    <property type="term" value="F:translation initiation factor binding"/>
    <property type="evidence" value="ECO:0007669"/>
    <property type="project" value="InterPro"/>
</dbReference>
<dbReference type="GO" id="GO:0030707">
    <property type="term" value="P:follicle cell of egg chamber development"/>
    <property type="evidence" value="ECO:0007669"/>
    <property type="project" value="EnsemblMetazoa"/>
</dbReference>
<dbReference type="GO" id="GO:0001732">
    <property type="term" value="P:formation of cytoplasmic translation initiation complex"/>
    <property type="evidence" value="ECO:0007669"/>
    <property type="project" value="UniProtKB-UniRule"/>
</dbReference>
<dbReference type="GO" id="GO:0006446">
    <property type="term" value="P:regulation of translational initiation"/>
    <property type="evidence" value="ECO:0000250"/>
    <property type="project" value="UniProtKB"/>
</dbReference>
<dbReference type="CDD" id="cd12278">
    <property type="entry name" value="RRM_eIF3B"/>
    <property type="match status" value="1"/>
</dbReference>
<dbReference type="FunFam" id="2.130.10.10:FF:000884">
    <property type="entry name" value="Eukaryotic translation initiation factor 3 subunit B"/>
    <property type="match status" value="1"/>
</dbReference>
<dbReference type="FunFam" id="3.30.70.330:FF:000607">
    <property type="entry name" value="Eukaryotic translation initiation factor 3 subunit B"/>
    <property type="match status" value="1"/>
</dbReference>
<dbReference type="Gene3D" id="3.30.70.330">
    <property type="match status" value="1"/>
</dbReference>
<dbReference type="Gene3D" id="2.130.10.10">
    <property type="entry name" value="YVTN repeat-like/Quinoprotein amine dehydrogenase"/>
    <property type="match status" value="1"/>
</dbReference>
<dbReference type="HAMAP" id="MF_03001">
    <property type="entry name" value="eIF3b"/>
    <property type="match status" value="1"/>
</dbReference>
<dbReference type="InterPro" id="IPR011400">
    <property type="entry name" value="EIF3B"/>
</dbReference>
<dbReference type="InterPro" id="IPR034363">
    <property type="entry name" value="eIF3B_RRM"/>
</dbReference>
<dbReference type="InterPro" id="IPR012677">
    <property type="entry name" value="Nucleotide-bd_a/b_plait_sf"/>
</dbReference>
<dbReference type="InterPro" id="IPR035979">
    <property type="entry name" value="RBD_domain_sf"/>
</dbReference>
<dbReference type="InterPro" id="IPR000504">
    <property type="entry name" value="RRM_dom"/>
</dbReference>
<dbReference type="InterPro" id="IPR013979">
    <property type="entry name" value="TIF_beta_prop-like"/>
</dbReference>
<dbReference type="InterPro" id="IPR015943">
    <property type="entry name" value="WD40/YVTN_repeat-like_dom_sf"/>
</dbReference>
<dbReference type="PANTHER" id="PTHR14068">
    <property type="entry name" value="EUKARYOTIC TRANSLATION INITIATION FACTOR 3 EIF3 -RELATED"/>
    <property type="match status" value="1"/>
</dbReference>
<dbReference type="PANTHER" id="PTHR14068:SF0">
    <property type="entry name" value="EUKARYOTIC TRANSLATION INITIATION FACTOR 3 SUBUNIT B"/>
    <property type="match status" value="1"/>
</dbReference>
<dbReference type="Pfam" id="PF08662">
    <property type="entry name" value="eIF2A"/>
    <property type="match status" value="1"/>
</dbReference>
<dbReference type="Pfam" id="PF00076">
    <property type="entry name" value="RRM_1"/>
    <property type="match status" value="1"/>
</dbReference>
<dbReference type="PIRSF" id="PIRSF036424">
    <property type="entry name" value="eIF3b"/>
    <property type="match status" value="1"/>
</dbReference>
<dbReference type="SMART" id="SM00360">
    <property type="entry name" value="RRM"/>
    <property type="match status" value="1"/>
</dbReference>
<dbReference type="SUPFAM" id="SSF82171">
    <property type="entry name" value="DPP6 N-terminal domain-like"/>
    <property type="match status" value="1"/>
</dbReference>
<dbReference type="SUPFAM" id="SSF54928">
    <property type="entry name" value="RNA-binding domain, RBD"/>
    <property type="match status" value="1"/>
</dbReference>
<dbReference type="PROSITE" id="PS50102">
    <property type="entry name" value="RRM"/>
    <property type="match status" value="1"/>
</dbReference>
<reference key="1">
    <citation type="journal article" date="2007" name="Nature">
        <title>Evolution of genes and genomes on the Drosophila phylogeny.</title>
        <authorList>
            <consortium name="Drosophila 12 genomes consortium"/>
        </authorList>
    </citation>
    <scope>NUCLEOTIDE SEQUENCE [LARGE SCALE GENOMIC DNA]</scope>
</reference>
<feature type="chain" id="PRO_0000363802" description="Eukaryotic translation initiation factor 3 subunit B">
    <location>
        <begin position="1"/>
        <end position="690"/>
    </location>
</feature>
<feature type="domain" description="RRM" evidence="2">
    <location>
        <begin position="57"/>
        <end position="141"/>
    </location>
</feature>
<feature type="repeat" description="WD 1">
    <location>
        <begin position="207"/>
        <end position="246"/>
    </location>
</feature>
<feature type="repeat" description="WD 2">
    <location>
        <begin position="293"/>
        <end position="331"/>
    </location>
</feature>
<feature type="repeat" description="WD 3">
    <location>
        <begin position="334"/>
        <end position="369"/>
    </location>
</feature>
<feature type="repeat" description="WD 4">
    <location>
        <begin position="442"/>
        <end position="484"/>
    </location>
</feature>
<feature type="repeat" description="WD 5">
    <location>
        <begin position="530"/>
        <end position="575"/>
    </location>
</feature>
<feature type="region of interest" description="Disordered" evidence="3">
    <location>
        <begin position="1"/>
        <end position="36"/>
    </location>
</feature>
<feature type="coiled-coil region" evidence="2">
    <location>
        <begin position="595"/>
        <end position="645"/>
    </location>
</feature>
<feature type="compositionally biased region" description="Basic and acidic residues" evidence="3">
    <location>
        <begin position="1"/>
        <end position="11"/>
    </location>
</feature>
<feature type="compositionally biased region" description="Acidic residues" evidence="3">
    <location>
        <begin position="15"/>
        <end position="25"/>
    </location>
</feature>
<gene>
    <name evidence="2" type="primary">eIF3b</name>
    <name evidence="2" type="synonym">eIF3-S9</name>
    <name type="ORF">GD11284</name>
</gene>
<name>EIF3B_DROSI</name>
<accession>B4QB88</accession>
<evidence type="ECO:0000250" key="1">
    <source>
        <dbReference type="UniProtKB" id="Q0E940"/>
    </source>
</evidence>
<evidence type="ECO:0000255" key="2">
    <source>
        <dbReference type="HAMAP-Rule" id="MF_03001"/>
    </source>
</evidence>
<evidence type="ECO:0000256" key="3">
    <source>
        <dbReference type="SAM" id="MobiDB-lite"/>
    </source>
</evidence>